<gene>
    <name type="primary">AMC7</name>
    <name type="synonym">AMC4</name>
    <name type="synonym">MCP2A</name>
    <name type="ordered locus">At1g79310</name>
    <name type="ORF">YUP8H12R.7</name>
</gene>
<dbReference type="EC" id="3.4.22.-"/>
<dbReference type="EMBL" id="AY219832">
    <property type="protein sequence ID" value="AAP44520.1"/>
    <property type="molecule type" value="mRNA"/>
</dbReference>
<dbReference type="EMBL" id="AY322528">
    <property type="protein sequence ID" value="AAP84709.1"/>
    <property type="molecule type" value="mRNA"/>
</dbReference>
<dbReference type="EMBL" id="AC002986">
    <property type="protein sequence ID" value="AAC17037.1"/>
    <property type="status" value="ALT_SEQ"/>
    <property type="molecule type" value="Genomic_DNA"/>
</dbReference>
<dbReference type="EMBL" id="CP002684">
    <property type="protein sequence ID" value="AEE36229.1"/>
    <property type="molecule type" value="Genomic_DNA"/>
</dbReference>
<dbReference type="EMBL" id="AK221818">
    <property type="protein sequence ID" value="BAD94017.1"/>
    <property type="status" value="ALT_SEQ"/>
    <property type="molecule type" value="mRNA"/>
</dbReference>
<dbReference type="PIR" id="T01024">
    <property type="entry name" value="T01024"/>
</dbReference>
<dbReference type="RefSeq" id="NP_178049.2">
    <property type="nucleotide sequence ID" value="NM_106579.5"/>
</dbReference>
<dbReference type="SMR" id="Q6XPT5"/>
<dbReference type="FunCoup" id="Q6XPT5">
    <property type="interactions" value="5"/>
</dbReference>
<dbReference type="STRING" id="3702.Q6XPT5"/>
<dbReference type="MEROPS" id="C14.A03"/>
<dbReference type="PaxDb" id="3702-AT1G79310.1"/>
<dbReference type="ProteomicsDB" id="238889"/>
<dbReference type="EnsemblPlants" id="AT1G79310.1">
    <property type="protein sequence ID" value="AT1G79310.1"/>
    <property type="gene ID" value="AT1G79310"/>
</dbReference>
<dbReference type="GeneID" id="844269"/>
<dbReference type="Gramene" id="AT1G79310.1">
    <property type="protein sequence ID" value="AT1G79310.1"/>
    <property type="gene ID" value="AT1G79310"/>
</dbReference>
<dbReference type="KEGG" id="ath:AT1G79310"/>
<dbReference type="Araport" id="AT1G79310"/>
<dbReference type="TAIR" id="AT1G79310">
    <property type="gene designation" value="MC7"/>
</dbReference>
<dbReference type="eggNOG" id="KOG1546">
    <property type="taxonomic scope" value="Eukaryota"/>
</dbReference>
<dbReference type="HOGENOM" id="CLU_029389_4_1_1"/>
<dbReference type="InParanoid" id="Q6XPT5"/>
<dbReference type="OMA" id="CNDRFVN"/>
<dbReference type="PhylomeDB" id="Q6XPT5"/>
<dbReference type="PRO" id="PR:Q6XPT5"/>
<dbReference type="Proteomes" id="UP000006548">
    <property type="component" value="Chromosome 1"/>
</dbReference>
<dbReference type="ExpressionAtlas" id="Q6XPT5">
    <property type="expression patterns" value="baseline and differential"/>
</dbReference>
<dbReference type="GO" id="GO:0004197">
    <property type="term" value="F:cysteine-type endopeptidase activity"/>
    <property type="evidence" value="ECO:0007669"/>
    <property type="project" value="InterPro"/>
</dbReference>
<dbReference type="GO" id="GO:0006508">
    <property type="term" value="P:proteolysis"/>
    <property type="evidence" value="ECO:0007669"/>
    <property type="project" value="UniProtKB-KW"/>
</dbReference>
<dbReference type="Gene3D" id="3.40.50.12660">
    <property type="match status" value="2"/>
</dbReference>
<dbReference type="InterPro" id="IPR029030">
    <property type="entry name" value="Caspase-like_dom_sf"/>
</dbReference>
<dbReference type="InterPro" id="IPR050452">
    <property type="entry name" value="Metacaspase"/>
</dbReference>
<dbReference type="InterPro" id="IPR011600">
    <property type="entry name" value="Pept_C14_caspase"/>
</dbReference>
<dbReference type="PANTHER" id="PTHR48104">
    <property type="entry name" value="METACASPASE-4"/>
    <property type="match status" value="1"/>
</dbReference>
<dbReference type="PANTHER" id="PTHR48104:SF14">
    <property type="entry name" value="METACASPASE-7"/>
    <property type="match status" value="1"/>
</dbReference>
<dbReference type="Pfam" id="PF00656">
    <property type="entry name" value="Peptidase_C14"/>
    <property type="match status" value="1"/>
</dbReference>
<dbReference type="SUPFAM" id="SSF52129">
    <property type="entry name" value="Caspase-like"/>
    <property type="match status" value="1"/>
</dbReference>
<accession>Q6XPT5</accession>
<accession>O64520</accession>
<accession>Q56X59</accession>
<accession>Q7XJE4</accession>
<sequence>MAKRALLIGINYPGTTEELQGCVNDVHRMHKCLVDRFGFAEEDITVLIDTDESYTQPTGKNIRQALSELIKPAKSGDVLFVHYSGHGTRVPPETGEEDDTGFDECIVPSDLNPIPDDDFRDLVEQVPEGCQITIVSDSCHSGGLIDEAKEQIGESTTTKPNRESKVSSFEFEFKNCLHSIFVKLLAFCGIGSSHVETREIVEVGEGDEVVRSRYLPLERFIELLKQQTGQDNIEIGKIRPTLFDVFGEDSSPKIKKFMKVILTKLRKTNDQSTLLGKIEESARGYIEETLNDEHYMKPAMQAQVKSDREIYGGRSSNGLFPDRGILLSGCQTDETSADVKKKGEAFGAFSNAIQMVLSETDHKDKITNKEMVLRAREILKKQMFIQRPGLYCNDRFVNAPFIC</sequence>
<keyword id="KW-0068">Autocatalytic cleavage</keyword>
<keyword id="KW-0378">Hydrolase</keyword>
<keyword id="KW-0645">Protease</keyword>
<keyword id="KW-1185">Reference proteome</keyword>
<keyword id="KW-0702">S-nitrosylation</keyword>
<keyword id="KW-0788">Thiol protease</keyword>
<feature type="chain" id="PRO_0000334605" description="Metacaspase-7">
    <location>
        <begin position="1"/>
        <end position="403"/>
    </location>
</feature>
<feature type="active site" evidence="1">
    <location>
        <position position="86"/>
    </location>
</feature>
<feature type="active site" evidence="1">
    <location>
        <position position="139"/>
    </location>
</feature>
<feature type="modified residue" description="S-nitrosocysteine" evidence="2">
    <location>
        <position position="139"/>
    </location>
</feature>
<feature type="sequence conflict" description="In Ref. 5; BAD94017." evidence="4" ref="5">
    <original>D</original>
    <variation>G</variation>
    <location>
        <position position="270"/>
    </location>
</feature>
<feature type="sequence conflict" description="In Ref. 2; AAP84709." evidence="4" ref="2">
    <original>Q</original>
    <variation>H</variation>
    <location>
        <position position="303"/>
    </location>
</feature>
<organism>
    <name type="scientific">Arabidopsis thaliana</name>
    <name type="common">Mouse-ear cress</name>
    <dbReference type="NCBI Taxonomy" id="3702"/>
    <lineage>
        <taxon>Eukaryota</taxon>
        <taxon>Viridiplantae</taxon>
        <taxon>Streptophyta</taxon>
        <taxon>Embryophyta</taxon>
        <taxon>Tracheophyta</taxon>
        <taxon>Spermatophyta</taxon>
        <taxon>Magnoliopsida</taxon>
        <taxon>eudicotyledons</taxon>
        <taxon>Gunneridae</taxon>
        <taxon>Pentapetalae</taxon>
        <taxon>rosids</taxon>
        <taxon>malvids</taxon>
        <taxon>Brassicales</taxon>
        <taxon>Brassicaceae</taxon>
        <taxon>Camelineae</taxon>
        <taxon>Arabidopsis</taxon>
    </lineage>
</organism>
<protein>
    <recommendedName>
        <fullName>Metacaspase-7</fullName>
        <shortName>AtMC7</shortName>
        <ecNumber>3.4.22.-</ecNumber>
    </recommendedName>
    <alternativeName>
        <fullName>Metacaspase 2a</fullName>
        <shortName>AtMCP2a</shortName>
    </alternativeName>
    <alternativeName>
        <fullName>Metacaspase-4</fullName>
    </alternativeName>
</protein>
<proteinExistence type="evidence at protein level"/>
<evidence type="ECO:0000250" key="1"/>
<evidence type="ECO:0000250" key="2">
    <source>
        <dbReference type="UniProtKB" id="Q9FYE1"/>
    </source>
</evidence>
<evidence type="ECO:0000269" key="3">
    <source>
    </source>
</evidence>
<evidence type="ECO:0000305" key="4"/>
<name>MCA7_ARATH</name>
<reference key="1">
    <citation type="journal article" date="2004" name="J. Biol. Chem.">
        <title>Type II metacaspases Atmc4 and Atmc9 of Arabidopsis thaliana cleave substrates after arginine and lysine.</title>
        <authorList>
            <person name="Vercammen D."/>
            <person name="van de Cotte B."/>
            <person name="De Jaeger G."/>
            <person name="Eeckhout D."/>
            <person name="Casteels P."/>
            <person name="Vandepoele K."/>
            <person name="Vandenberghe I."/>
            <person name="van Beeumen J."/>
            <person name="Inze D."/>
            <person name="van Breusegem F."/>
        </authorList>
    </citation>
    <scope>NUCLEOTIDE SEQUENCE [MRNA]</scope>
    <scope>AUTOCATALYTIC CLEAVAGE</scope>
    <scope>GENE FAMILY</scope>
    <scope>NOMENCLATURE</scope>
</reference>
<reference key="2">
    <citation type="submission" date="2003-06" db="EMBL/GenBank/DDBJ databases">
        <title>Characterization of metacaspases.</title>
        <authorList>
            <person name="Ikeda Y."/>
            <person name="Krishnamurthy N."/>
            <person name="Chua N.-H."/>
        </authorList>
    </citation>
    <scope>NUCLEOTIDE SEQUENCE [MRNA]</scope>
</reference>
<reference key="3">
    <citation type="journal article" date="2000" name="Nature">
        <title>Sequence and analysis of chromosome 1 of the plant Arabidopsis thaliana.</title>
        <authorList>
            <person name="Theologis A."/>
            <person name="Ecker J.R."/>
            <person name="Palm C.J."/>
            <person name="Federspiel N.A."/>
            <person name="Kaul S."/>
            <person name="White O."/>
            <person name="Alonso J."/>
            <person name="Altafi H."/>
            <person name="Araujo R."/>
            <person name="Bowman C.L."/>
            <person name="Brooks S.Y."/>
            <person name="Buehler E."/>
            <person name="Chan A."/>
            <person name="Chao Q."/>
            <person name="Chen H."/>
            <person name="Cheuk R.F."/>
            <person name="Chin C.W."/>
            <person name="Chung M.K."/>
            <person name="Conn L."/>
            <person name="Conway A.B."/>
            <person name="Conway A.R."/>
            <person name="Creasy T.H."/>
            <person name="Dewar K."/>
            <person name="Dunn P."/>
            <person name="Etgu P."/>
            <person name="Feldblyum T.V."/>
            <person name="Feng J.-D."/>
            <person name="Fong B."/>
            <person name="Fujii C.Y."/>
            <person name="Gill J.E."/>
            <person name="Goldsmith A.D."/>
            <person name="Haas B."/>
            <person name="Hansen N.F."/>
            <person name="Hughes B."/>
            <person name="Huizar L."/>
            <person name="Hunter J.L."/>
            <person name="Jenkins J."/>
            <person name="Johnson-Hopson C."/>
            <person name="Khan S."/>
            <person name="Khaykin E."/>
            <person name="Kim C.J."/>
            <person name="Koo H.L."/>
            <person name="Kremenetskaia I."/>
            <person name="Kurtz D.B."/>
            <person name="Kwan A."/>
            <person name="Lam B."/>
            <person name="Langin-Hooper S."/>
            <person name="Lee A."/>
            <person name="Lee J.M."/>
            <person name="Lenz C.A."/>
            <person name="Li J.H."/>
            <person name="Li Y.-P."/>
            <person name="Lin X."/>
            <person name="Liu S.X."/>
            <person name="Liu Z.A."/>
            <person name="Luros J.S."/>
            <person name="Maiti R."/>
            <person name="Marziali A."/>
            <person name="Militscher J."/>
            <person name="Miranda M."/>
            <person name="Nguyen M."/>
            <person name="Nierman W.C."/>
            <person name="Osborne B.I."/>
            <person name="Pai G."/>
            <person name="Peterson J."/>
            <person name="Pham P.K."/>
            <person name="Rizzo M."/>
            <person name="Rooney T."/>
            <person name="Rowley D."/>
            <person name="Sakano H."/>
            <person name="Salzberg S.L."/>
            <person name="Schwartz J.R."/>
            <person name="Shinn P."/>
            <person name="Southwick A.M."/>
            <person name="Sun H."/>
            <person name="Tallon L.J."/>
            <person name="Tambunga G."/>
            <person name="Toriumi M.J."/>
            <person name="Town C.D."/>
            <person name="Utterback T."/>
            <person name="Van Aken S."/>
            <person name="Vaysberg M."/>
            <person name="Vysotskaia V.S."/>
            <person name="Walker M."/>
            <person name="Wu D."/>
            <person name="Yu G."/>
            <person name="Fraser C.M."/>
            <person name="Venter J.C."/>
            <person name="Davis R.W."/>
        </authorList>
    </citation>
    <scope>NUCLEOTIDE SEQUENCE [LARGE SCALE GENOMIC DNA]</scope>
    <source>
        <strain>cv. Columbia</strain>
    </source>
</reference>
<reference key="4">
    <citation type="journal article" date="2017" name="Plant J.">
        <title>Araport11: a complete reannotation of the Arabidopsis thaliana reference genome.</title>
        <authorList>
            <person name="Cheng C.Y."/>
            <person name="Krishnakumar V."/>
            <person name="Chan A.P."/>
            <person name="Thibaud-Nissen F."/>
            <person name="Schobel S."/>
            <person name="Town C.D."/>
        </authorList>
    </citation>
    <scope>GENOME REANNOTATION</scope>
    <source>
        <strain>cv. Columbia</strain>
    </source>
</reference>
<reference key="5">
    <citation type="submission" date="2005-03" db="EMBL/GenBank/DDBJ databases">
        <title>Large-scale analysis of RIKEN Arabidopsis full-length (RAFL) cDNAs.</title>
        <authorList>
            <person name="Totoki Y."/>
            <person name="Seki M."/>
            <person name="Ishida J."/>
            <person name="Nakajima M."/>
            <person name="Enju A."/>
            <person name="Kamiya A."/>
            <person name="Narusaka M."/>
            <person name="Shin-i T."/>
            <person name="Nakagawa M."/>
            <person name="Sakamoto N."/>
            <person name="Oishi K."/>
            <person name="Kohara Y."/>
            <person name="Kobayashi M."/>
            <person name="Toyoda A."/>
            <person name="Sakaki Y."/>
            <person name="Sakurai T."/>
            <person name="Iida K."/>
            <person name="Akiyama K."/>
            <person name="Satou M."/>
            <person name="Toyoda T."/>
            <person name="Konagaya A."/>
            <person name="Carninci P."/>
            <person name="Kawai J."/>
            <person name="Hayashizaki Y."/>
            <person name="Shinozaki K."/>
        </authorList>
    </citation>
    <scope>NUCLEOTIDE SEQUENCE [LARGE SCALE MRNA]</scope>
    <source>
        <strain>cv. Columbia</strain>
    </source>
</reference>
<reference key="6">
    <citation type="journal article" date="2004" name="Mol. Plant Pathol.">
        <title>Recent advance in the study of caspase-like proteases and Bax inhibitor-1 in plants: their possible roles as regulator of programmed cell death.</title>
        <authorList>
            <person name="Watanabe N."/>
            <person name="Lam E."/>
        </authorList>
    </citation>
    <scope>GENE FAMILY</scope>
</reference>
<reference key="7">
    <citation type="journal article" date="2011" name="Plant J.">
        <title>Arabidopsis metacaspase 2d is a positive mediator of cell death induced during biotic and abiotic stresses.</title>
        <authorList>
            <person name="Watanabe N."/>
            <person name="Lam E."/>
        </authorList>
    </citation>
    <scope>TISSUE SPECIFICITY</scope>
</reference>
<comment type="tissue specificity">
    <text evidence="3">Expressed in roots, flowers and siliques.</text>
</comment>
<comment type="PTM">
    <text>Proteolytically processed; by an autocatalytic mechanism.</text>
</comment>
<comment type="similarity">
    <text evidence="4">Belongs to the peptidase C14B family.</text>
</comment>
<comment type="sequence caution" evidence="4">
    <conflict type="erroneous gene model prediction">
        <sequence resource="EMBL-CDS" id="AAC17037"/>
    </conflict>
</comment>
<comment type="sequence caution" evidence="4">
    <conflict type="miscellaneous discrepancy">
        <sequence resource="EMBL-CDS" id="BAD94017"/>
    </conflict>
    <text>Intron retention.</text>
</comment>